<keyword id="KW-0274">FAD</keyword>
<keyword id="KW-0285">Flavoprotein</keyword>
<keyword id="KW-0560">Oxidoreductase</keyword>
<keyword id="KW-1185">Reference proteome</keyword>
<accession>Q8ZEL7</accession>
<accession>Q0WF15</accession>
<name>DADA_YERPE</name>
<feature type="chain" id="PRO_0000166159" description="D-amino acid dehydrogenase">
    <location>
        <begin position="1"/>
        <end position="434"/>
    </location>
</feature>
<feature type="binding site" evidence="1">
    <location>
        <begin position="3"/>
        <end position="17"/>
    </location>
    <ligand>
        <name>FAD</name>
        <dbReference type="ChEBI" id="CHEBI:57692"/>
    </ligand>
</feature>
<sequence length="434" mass="47204">MRVVILGSGVVGVTSAWYLAKEGHDVTVIDRQDGPAQETSAGNAGQISPGYAAPWAAPGVPLKAIKWMFQRHAPLAIRLDGSSLQLRWMWQMLRNCDTSHYMVNKSRMVRLAEYSRDCLKDLRAATGIQYEGRQGGTLQLFRTEQQFDNAAKDIAVLDDAGVPYSLLTAEQLATVEPALAKVAHKLTGGLRLPNDETGDCKLFTERLAKMAEQAGVKFIFNRSVDKLLVEGDQIAGVLCGDDIIKADAYVVAFGAYSTALLAGLVSIPVYPLKGYSLTIPITDPASAPFSTVLDETYKIAITRFDDRIRVGGMAEIVGFNTQLAPARRETLEMVVRDLYPHGGDISQAVFWSGLRPMTPDGTPIVGRTPLKNLYLNTGHGTLGWTMACGSGQLLADIIQGRRPAIVADDLSVARYRAGFQPLNIAPLHDIHPIR</sequence>
<comment type="function">
    <text evidence="1">Oxidative deamination of D-amino acids.</text>
</comment>
<comment type="catalytic activity">
    <reaction evidence="1">
        <text>a D-alpha-amino acid + A + H2O = a 2-oxocarboxylate + AH2 + NH4(+)</text>
        <dbReference type="Rhea" id="RHEA:18125"/>
        <dbReference type="ChEBI" id="CHEBI:13193"/>
        <dbReference type="ChEBI" id="CHEBI:15377"/>
        <dbReference type="ChEBI" id="CHEBI:17499"/>
        <dbReference type="ChEBI" id="CHEBI:28938"/>
        <dbReference type="ChEBI" id="CHEBI:35179"/>
        <dbReference type="ChEBI" id="CHEBI:59871"/>
    </reaction>
</comment>
<comment type="cofactor">
    <cofactor evidence="1">
        <name>FAD</name>
        <dbReference type="ChEBI" id="CHEBI:57692"/>
    </cofactor>
</comment>
<comment type="similarity">
    <text evidence="1">Belongs to the DadA oxidoreductase family.</text>
</comment>
<gene>
    <name evidence="1" type="primary">dadA</name>
    <name type="ordered locus">YPO2147</name>
    <name type="ordered locus">y2174</name>
    <name type="ordered locus">YP_1948</name>
</gene>
<dbReference type="EC" id="1.4.99.-" evidence="1"/>
<dbReference type="EMBL" id="AL590842">
    <property type="protein sequence ID" value="CAL20779.1"/>
    <property type="molecule type" value="Genomic_DNA"/>
</dbReference>
<dbReference type="EMBL" id="AE009952">
    <property type="protein sequence ID" value="AAM85736.1"/>
    <property type="molecule type" value="Genomic_DNA"/>
</dbReference>
<dbReference type="EMBL" id="AE017042">
    <property type="protein sequence ID" value="AAS62165.1"/>
    <property type="molecule type" value="Genomic_DNA"/>
</dbReference>
<dbReference type="PIR" id="AH0261">
    <property type="entry name" value="AH0261"/>
</dbReference>
<dbReference type="RefSeq" id="WP_002211686.1">
    <property type="nucleotide sequence ID" value="NZ_WUCM01000055.1"/>
</dbReference>
<dbReference type="RefSeq" id="YP_002347123.1">
    <property type="nucleotide sequence ID" value="NC_003143.1"/>
</dbReference>
<dbReference type="SMR" id="Q8ZEL7"/>
<dbReference type="IntAct" id="Q8ZEL7">
    <property type="interactions" value="5"/>
</dbReference>
<dbReference type="STRING" id="214092.YPO2147"/>
<dbReference type="PaxDb" id="214092-YPO2147"/>
<dbReference type="DNASU" id="1147121"/>
<dbReference type="EnsemblBacteria" id="AAS62165">
    <property type="protein sequence ID" value="AAS62165"/>
    <property type="gene ID" value="YP_1948"/>
</dbReference>
<dbReference type="KEGG" id="ype:YPO2147"/>
<dbReference type="KEGG" id="ypk:y2174"/>
<dbReference type="KEGG" id="ypm:YP_1948"/>
<dbReference type="PATRIC" id="fig|214092.21.peg.2533"/>
<dbReference type="eggNOG" id="COG0665">
    <property type="taxonomic scope" value="Bacteria"/>
</dbReference>
<dbReference type="HOGENOM" id="CLU_007884_9_2_6"/>
<dbReference type="OMA" id="YSITFKM"/>
<dbReference type="OrthoDB" id="9805337at2"/>
<dbReference type="Proteomes" id="UP000000815">
    <property type="component" value="Chromosome"/>
</dbReference>
<dbReference type="Proteomes" id="UP000001019">
    <property type="component" value="Chromosome"/>
</dbReference>
<dbReference type="Proteomes" id="UP000002490">
    <property type="component" value="Chromosome"/>
</dbReference>
<dbReference type="GO" id="GO:0005737">
    <property type="term" value="C:cytoplasm"/>
    <property type="evidence" value="ECO:0000318"/>
    <property type="project" value="GO_Central"/>
</dbReference>
<dbReference type="GO" id="GO:0005886">
    <property type="term" value="C:plasma membrane"/>
    <property type="evidence" value="ECO:0000318"/>
    <property type="project" value="GO_Central"/>
</dbReference>
<dbReference type="GO" id="GO:0008718">
    <property type="term" value="F:D-amino-acid dehydrogenase activity"/>
    <property type="evidence" value="ECO:0000318"/>
    <property type="project" value="GO_Central"/>
</dbReference>
<dbReference type="GO" id="GO:0055130">
    <property type="term" value="P:D-alanine catabolic process"/>
    <property type="evidence" value="ECO:0000318"/>
    <property type="project" value="GO_Central"/>
</dbReference>
<dbReference type="FunFam" id="3.50.50.60:FF:000020">
    <property type="entry name" value="D-amino acid dehydrogenase"/>
    <property type="match status" value="1"/>
</dbReference>
<dbReference type="Gene3D" id="3.30.9.10">
    <property type="entry name" value="D-Amino Acid Oxidase, subunit A, domain 2"/>
    <property type="match status" value="1"/>
</dbReference>
<dbReference type="Gene3D" id="3.50.50.60">
    <property type="entry name" value="FAD/NAD(P)-binding domain"/>
    <property type="match status" value="2"/>
</dbReference>
<dbReference type="HAMAP" id="MF_01202">
    <property type="entry name" value="DadA"/>
    <property type="match status" value="1"/>
</dbReference>
<dbReference type="InterPro" id="IPR023080">
    <property type="entry name" value="DadA"/>
</dbReference>
<dbReference type="InterPro" id="IPR006076">
    <property type="entry name" value="FAD-dep_OxRdtase"/>
</dbReference>
<dbReference type="InterPro" id="IPR036188">
    <property type="entry name" value="FAD/NAD-bd_sf"/>
</dbReference>
<dbReference type="NCBIfam" id="NF001933">
    <property type="entry name" value="PRK00711.1"/>
    <property type="match status" value="1"/>
</dbReference>
<dbReference type="PANTHER" id="PTHR13847:SF280">
    <property type="entry name" value="D-AMINO ACID DEHYDROGENASE"/>
    <property type="match status" value="1"/>
</dbReference>
<dbReference type="PANTHER" id="PTHR13847">
    <property type="entry name" value="SARCOSINE DEHYDROGENASE-RELATED"/>
    <property type="match status" value="1"/>
</dbReference>
<dbReference type="Pfam" id="PF01266">
    <property type="entry name" value="DAO"/>
    <property type="match status" value="1"/>
</dbReference>
<dbReference type="SUPFAM" id="SSF54373">
    <property type="entry name" value="FAD-linked reductases, C-terminal domain"/>
    <property type="match status" value="1"/>
</dbReference>
<dbReference type="SUPFAM" id="SSF51905">
    <property type="entry name" value="FAD/NAD(P)-binding domain"/>
    <property type="match status" value="1"/>
</dbReference>
<organism>
    <name type="scientific">Yersinia pestis</name>
    <dbReference type="NCBI Taxonomy" id="632"/>
    <lineage>
        <taxon>Bacteria</taxon>
        <taxon>Pseudomonadati</taxon>
        <taxon>Pseudomonadota</taxon>
        <taxon>Gammaproteobacteria</taxon>
        <taxon>Enterobacterales</taxon>
        <taxon>Yersiniaceae</taxon>
        <taxon>Yersinia</taxon>
    </lineage>
</organism>
<evidence type="ECO:0000255" key="1">
    <source>
        <dbReference type="HAMAP-Rule" id="MF_01202"/>
    </source>
</evidence>
<reference key="1">
    <citation type="journal article" date="2001" name="Nature">
        <title>Genome sequence of Yersinia pestis, the causative agent of plague.</title>
        <authorList>
            <person name="Parkhill J."/>
            <person name="Wren B.W."/>
            <person name="Thomson N.R."/>
            <person name="Titball R.W."/>
            <person name="Holden M.T.G."/>
            <person name="Prentice M.B."/>
            <person name="Sebaihia M."/>
            <person name="James K.D."/>
            <person name="Churcher C.M."/>
            <person name="Mungall K.L."/>
            <person name="Baker S."/>
            <person name="Basham D."/>
            <person name="Bentley S.D."/>
            <person name="Brooks K."/>
            <person name="Cerdeno-Tarraga A.-M."/>
            <person name="Chillingworth T."/>
            <person name="Cronin A."/>
            <person name="Davies R.M."/>
            <person name="Davis P."/>
            <person name="Dougan G."/>
            <person name="Feltwell T."/>
            <person name="Hamlin N."/>
            <person name="Holroyd S."/>
            <person name="Jagels K."/>
            <person name="Karlyshev A.V."/>
            <person name="Leather S."/>
            <person name="Moule S."/>
            <person name="Oyston P.C.F."/>
            <person name="Quail M.A."/>
            <person name="Rutherford K.M."/>
            <person name="Simmonds M."/>
            <person name="Skelton J."/>
            <person name="Stevens K."/>
            <person name="Whitehead S."/>
            <person name="Barrell B.G."/>
        </authorList>
    </citation>
    <scope>NUCLEOTIDE SEQUENCE [LARGE SCALE GENOMIC DNA]</scope>
    <source>
        <strain>CO-92 / Biovar Orientalis</strain>
    </source>
</reference>
<reference key="2">
    <citation type="journal article" date="2002" name="J. Bacteriol.">
        <title>Genome sequence of Yersinia pestis KIM.</title>
        <authorList>
            <person name="Deng W."/>
            <person name="Burland V."/>
            <person name="Plunkett G. III"/>
            <person name="Boutin A."/>
            <person name="Mayhew G.F."/>
            <person name="Liss P."/>
            <person name="Perna N.T."/>
            <person name="Rose D.J."/>
            <person name="Mau B."/>
            <person name="Zhou S."/>
            <person name="Schwartz D.C."/>
            <person name="Fetherston J.D."/>
            <person name="Lindler L.E."/>
            <person name="Brubaker R.R."/>
            <person name="Plano G.V."/>
            <person name="Straley S.C."/>
            <person name="McDonough K.A."/>
            <person name="Nilles M.L."/>
            <person name="Matson J.S."/>
            <person name="Blattner F.R."/>
            <person name="Perry R.D."/>
        </authorList>
    </citation>
    <scope>NUCLEOTIDE SEQUENCE [LARGE SCALE GENOMIC DNA]</scope>
    <source>
        <strain>KIM10+ / Biovar Mediaevalis</strain>
    </source>
</reference>
<reference key="3">
    <citation type="journal article" date="2004" name="DNA Res.">
        <title>Complete genome sequence of Yersinia pestis strain 91001, an isolate avirulent to humans.</title>
        <authorList>
            <person name="Song Y."/>
            <person name="Tong Z."/>
            <person name="Wang J."/>
            <person name="Wang L."/>
            <person name="Guo Z."/>
            <person name="Han Y."/>
            <person name="Zhang J."/>
            <person name="Pei D."/>
            <person name="Zhou D."/>
            <person name="Qin H."/>
            <person name="Pang X."/>
            <person name="Han Y."/>
            <person name="Zhai J."/>
            <person name="Li M."/>
            <person name="Cui B."/>
            <person name="Qi Z."/>
            <person name="Jin L."/>
            <person name="Dai R."/>
            <person name="Chen F."/>
            <person name="Li S."/>
            <person name="Ye C."/>
            <person name="Du Z."/>
            <person name="Lin W."/>
            <person name="Wang J."/>
            <person name="Yu J."/>
            <person name="Yang H."/>
            <person name="Wang J."/>
            <person name="Huang P."/>
            <person name="Yang R."/>
        </authorList>
    </citation>
    <scope>NUCLEOTIDE SEQUENCE [LARGE SCALE GENOMIC DNA]</scope>
    <source>
        <strain>91001 / Biovar Mediaevalis</strain>
    </source>
</reference>
<protein>
    <recommendedName>
        <fullName evidence="1">D-amino acid dehydrogenase</fullName>
        <ecNumber evidence="1">1.4.99.-</ecNumber>
    </recommendedName>
</protein>
<proteinExistence type="inferred from homology"/>